<protein>
    <recommendedName>
        <fullName>Cytotoxin 5</fullName>
    </recommendedName>
    <alternativeName>
        <fullName>Cardiotoxin 5</fullName>
        <shortName>CTX5</shortName>
    </alternativeName>
</protein>
<accession>Q98961</accession>
<comment type="function">
    <text evidence="2 3">Shows cytolytic activity on many different cells by forming pore in lipid membranes. In vivo, increases heart rate or kills the animal by cardiac arrest. In addition, it binds to heparin with high affinity, interacts with Kv channel-interacting protein 1 (KCNIP1) in a calcium-independent manner, and binds to integrin alpha-V/beta-3 (ITGAV/ITGB3) with moderate affinity.</text>
</comment>
<comment type="subunit">
    <text evidence="2">Monomer in solution; Homodimer and oligomer in the presence of negatively charged lipids forming a pore with a size ranging between 20 and 30 Angstroms.</text>
</comment>
<comment type="subcellular location">
    <subcellularLocation>
        <location evidence="1">Secreted</location>
    </subcellularLocation>
    <subcellularLocation>
        <location evidence="2">Target cell membrane</location>
    </subcellularLocation>
</comment>
<comment type="tissue specificity">
    <text evidence="4">Expressed by the venom gland.</text>
</comment>
<comment type="miscellaneous">
    <text evidence="4">Is classified as a S-type cytotoxin, since a serine residue stands at position 49 (Ser-29 in standard classification).</text>
</comment>
<comment type="similarity">
    <text evidence="4">Belongs to the three-finger toxin family. Short-chain subfamily. Type IA cytotoxin sub-subfamily.</text>
</comment>
<evidence type="ECO:0000250" key="1"/>
<evidence type="ECO:0000250" key="2">
    <source>
        <dbReference type="UniProtKB" id="P60301"/>
    </source>
</evidence>
<evidence type="ECO:0000250" key="3">
    <source>
        <dbReference type="UniProtKB" id="P60304"/>
    </source>
</evidence>
<evidence type="ECO:0000305" key="4"/>
<name>3SA5_NAJAT</name>
<sequence>MKTLLLTLVVVTIVCLDLGYTLKCNKLVPLFYKTCPAGKNLCYKMFMVSNKMVPVKRGCIDVCPKNSALVKYVCCNTDRCN</sequence>
<proteinExistence type="inferred from homology"/>
<organism>
    <name type="scientific">Naja atra</name>
    <name type="common">Chinese cobra</name>
    <dbReference type="NCBI Taxonomy" id="8656"/>
    <lineage>
        <taxon>Eukaryota</taxon>
        <taxon>Metazoa</taxon>
        <taxon>Chordata</taxon>
        <taxon>Craniata</taxon>
        <taxon>Vertebrata</taxon>
        <taxon>Euteleostomi</taxon>
        <taxon>Lepidosauria</taxon>
        <taxon>Squamata</taxon>
        <taxon>Bifurcata</taxon>
        <taxon>Unidentata</taxon>
        <taxon>Episquamata</taxon>
        <taxon>Toxicofera</taxon>
        <taxon>Serpentes</taxon>
        <taxon>Colubroidea</taxon>
        <taxon>Elapidae</taxon>
        <taxon>Elapinae</taxon>
        <taxon>Naja</taxon>
    </lineage>
</organism>
<reference key="1">
    <citation type="submission" date="1996-05" db="EMBL/GenBank/DDBJ databases">
        <authorList>
            <person name="Chu R.C."/>
            <person name="Yang C.-C."/>
        </authorList>
    </citation>
    <scope>NUCLEOTIDE SEQUENCE [MRNA]</scope>
    <source>
        <tissue>Venom gland</tissue>
    </source>
</reference>
<dbReference type="EMBL" id="U58489">
    <property type="protein sequence ID" value="AAB18385.1"/>
    <property type="molecule type" value="mRNA"/>
</dbReference>
<dbReference type="SMR" id="Q98961"/>
<dbReference type="GO" id="GO:0005576">
    <property type="term" value="C:extracellular region"/>
    <property type="evidence" value="ECO:0007669"/>
    <property type="project" value="UniProtKB-SubCell"/>
</dbReference>
<dbReference type="GO" id="GO:0016020">
    <property type="term" value="C:membrane"/>
    <property type="evidence" value="ECO:0007669"/>
    <property type="project" value="UniProtKB-KW"/>
</dbReference>
<dbReference type="GO" id="GO:0044218">
    <property type="term" value="C:other organism cell membrane"/>
    <property type="evidence" value="ECO:0007669"/>
    <property type="project" value="UniProtKB-KW"/>
</dbReference>
<dbReference type="GO" id="GO:0090729">
    <property type="term" value="F:toxin activity"/>
    <property type="evidence" value="ECO:0007669"/>
    <property type="project" value="UniProtKB-KW"/>
</dbReference>
<dbReference type="GO" id="GO:0031640">
    <property type="term" value="P:killing of cells of another organism"/>
    <property type="evidence" value="ECO:0007669"/>
    <property type="project" value="UniProtKB-KW"/>
</dbReference>
<dbReference type="CDD" id="cd00206">
    <property type="entry name" value="TFP_snake_toxin"/>
    <property type="match status" value="1"/>
</dbReference>
<dbReference type="FunFam" id="2.10.60.10:FF:000024">
    <property type="entry name" value="Cytotoxin 1"/>
    <property type="match status" value="1"/>
</dbReference>
<dbReference type="Gene3D" id="2.10.60.10">
    <property type="entry name" value="CD59"/>
    <property type="match status" value="1"/>
</dbReference>
<dbReference type="InterPro" id="IPR003572">
    <property type="entry name" value="Cytotoxin_Cobra"/>
</dbReference>
<dbReference type="InterPro" id="IPR003571">
    <property type="entry name" value="Snake_3FTx"/>
</dbReference>
<dbReference type="InterPro" id="IPR045860">
    <property type="entry name" value="Snake_toxin-like_sf"/>
</dbReference>
<dbReference type="InterPro" id="IPR018354">
    <property type="entry name" value="Snake_toxin_con_site"/>
</dbReference>
<dbReference type="InterPro" id="IPR054131">
    <property type="entry name" value="Toxin_cobra-type"/>
</dbReference>
<dbReference type="Pfam" id="PF21947">
    <property type="entry name" value="Toxin_cobra-type"/>
    <property type="match status" value="1"/>
</dbReference>
<dbReference type="PRINTS" id="PR00282">
    <property type="entry name" value="CYTOTOXIN"/>
</dbReference>
<dbReference type="SUPFAM" id="SSF57302">
    <property type="entry name" value="Snake toxin-like"/>
    <property type="match status" value="1"/>
</dbReference>
<dbReference type="PROSITE" id="PS00272">
    <property type="entry name" value="SNAKE_TOXIN"/>
    <property type="match status" value="1"/>
</dbReference>
<keyword id="KW-0123">Cardiotoxin</keyword>
<keyword id="KW-0204">Cytolysis</keyword>
<keyword id="KW-1015">Disulfide bond</keyword>
<keyword id="KW-0472">Membrane</keyword>
<keyword id="KW-0964">Secreted</keyword>
<keyword id="KW-0732">Signal</keyword>
<keyword id="KW-1052">Target cell membrane</keyword>
<keyword id="KW-1053">Target membrane</keyword>
<keyword id="KW-0800">Toxin</keyword>
<feature type="signal peptide" evidence="1">
    <location>
        <begin position="1"/>
        <end position="21"/>
    </location>
</feature>
<feature type="chain" id="PRO_0000035377" description="Cytotoxin 5">
    <location>
        <begin position="22"/>
        <end position="81"/>
    </location>
</feature>
<feature type="disulfide bond" evidence="2">
    <location>
        <begin position="24"/>
        <end position="42"/>
    </location>
</feature>
<feature type="disulfide bond" evidence="2">
    <location>
        <begin position="35"/>
        <end position="59"/>
    </location>
</feature>
<feature type="disulfide bond" evidence="2">
    <location>
        <begin position="63"/>
        <end position="74"/>
    </location>
</feature>
<feature type="disulfide bond" evidence="2">
    <location>
        <begin position="75"/>
        <end position="80"/>
    </location>
</feature>